<gene>
    <name evidence="1" type="primary">ctaB</name>
    <name type="ordered locus">Acry_2165</name>
</gene>
<reference key="1">
    <citation type="submission" date="2007-05" db="EMBL/GenBank/DDBJ databases">
        <title>Complete sequence of chromosome of Acidiphilium cryptum JF-5.</title>
        <authorList>
            <consortium name="US DOE Joint Genome Institute"/>
            <person name="Copeland A."/>
            <person name="Lucas S."/>
            <person name="Lapidus A."/>
            <person name="Barry K."/>
            <person name="Detter J.C."/>
            <person name="Glavina del Rio T."/>
            <person name="Hammon N."/>
            <person name="Israni S."/>
            <person name="Dalin E."/>
            <person name="Tice H."/>
            <person name="Pitluck S."/>
            <person name="Sims D."/>
            <person name="Brettin T."/>
            <person name="Bruce D."/>
            <person name="Han C."/>
            <person name="Schmutz J."/>
            <person name="Larimer F."/>
            <person name="Land M."/>
            <person name="Hauser L."/>
            <person name="Kyrpides N."/>
            <person name="Kim E."/>
            <person name="Magnuson T."/>
            <person name="Richardson P."/>
        </authorList>
    </citation>
    <scope>NUCLEOTIDE SEQUENCE [LARGE SCALE GENOMIC DNA]</scope>
    <source>
        <strain>JF-5</strain>
    </source>
</reference>
<comment type="function">
    <text evidence="1">Converts heme B (protoheme IX) to heme O by substitution of the vinyl group on carbon 2 of heme B porphyrin ring with a hydroxyethyl farnesyl side group.</text>
</comment>
<comment type="catalytic activity">
    <reaction evidence="1">
        <text>heme b + (2E,6E)-farnesyl diphosphate + H2O = Fe(II)-heme o + diphosphate</text>
        <dbReference type="Rhea" id="RHEA:28070"/>
        <dbReference type="ChEBI" id="CHEBI:15377"/>
        <dbReference type="ChEBI" id="CHEBI:33019"/>
        <dbReference type="ChEBI" id="CHEBI:60344"/>
        <dbReference type="ChEBI" id="CHEBI:60530"/>
        <dbReference type="ChEBI" id="CHEBI:175763"/>
        <dbReference type="EC" id="2.5.1.141"/>
    </reaction>
</comment>
<comment type="pathway">
    <text evidence="1">Porphyrin-containing compound metabolism; heme O biosynthesis; heme O from protoheme: step 1/1.</text>
</comment>
<comment type="subcellular location">
    <subcellularLocation>
        <location evidence="1">Cell inner membrane</location>
        <topology evidence="1">Multi-pass membrane protein</topology>
    </subcellularLocation>
</comment>
<comment type="miscellaneous">
    <text evidence="1">Carbon 2 of the heme B porphyrin ring is defined according to the Fischer nomenclature.</text>
</comment>
<comment type="similarity">
    <text evidence="1">Belongs to the UbiA prenyltransferase family. Protoheme IX farnesyltransferase subfamily.</text>
</comment>
<sequence length="317" mass="33814">MSDTILRTSATAVPDTALLDQSLLGATAGDWLALLKPRVLYLVVYTGAAGLLVAPGGINPILGFTAILCIAMAAGAAGAINMWYDRDIDAVMRRTAGRPIPTGRISPDGALAYGVALSALSVLLMWLATNLLAAGLLAASIGFYVFIYTMWLKRRTPQNIVIGGAAGAFPPVIGWAAATGHVGLLPVLLFAIIFFWTPPHFWALSLFASADYQKAGVPMLPVVAGQKATRLAVMRYTLWLVPLSLLPYVLHLAGPVYGASAMVLGLAFVWYSWRVLRDRQDGNGVSLTRDAPAKAAFKFSILYLFLIFGALVLDHLV</sequence>
<protein>
    <recommendedName>
        <fullName evidence="1">Protoheme IX farnesyltransferase</fullName>
        <ecNumber evidence="1">2.5.1.141</ecNumber>
    </recommendedName>
    <alternativeName>
        <fullName evidence="1">Heme B farnesyltransferase</fullName>
    </alternativeName>
    <alternativeName>
        <fullName evidence="1">Heme O synthase</fullName>
    </alternativeName>
</protein>
<dbReference type="EC" id="2.5.1.141" evidence="1"/>
<dbReference type="EMBL" id="CP000697">
    <property type="protein sequence ID" value="ABQ31364.1"/>
    <property type="molecule type" value="Genomic_DNA"/>
</dbReference>
<dbReference type="RefSeq" id="WP_012039852.1">
    <property type="nucleotide sequence ID" value="NC_009484.1"/>
</dbReference>
<dbReference type="SMR" id="A5G0I2"/>
<dbReference type="STRING" id="349163.Acry_2165"/>
<dbReference type="KEGG" id="acr:Acry_2165"/>
<dbReference type="eggNOG" id="COG0109">
    <property type="taxonomic scope" value="Bacteria"/>
</dbReference>
<dbReference type="HOGENOM" id="CLU_029631_0_2_5"/>
<dbReference type="UniPathway" id="UPA00834">
    <property type="reaction ID" value="UER00712"/>
</dbReference>
<dbReference type="Proteomes" id="UP000000245">
    <property type="component" value="Chromosome"/>
</dbReference>
<dbReference type="GO" id="GO:0005886">
    <property type="term" value="C:plasma membrane"/>
    <property type="evidence" value="ECO:0007669"/>
    <property type="project" value="UniProtKB-SubCell"/>
</dbReference>
<dbReference type="GO" id="GO:0008495">
    <property type="term" value="F:protoheme IX farnesyltransferase activity"/>
    <property type="evidence" value="ECO:0007669"/>
    <property type="project" value="UniProtKB-UniRule"/>
</dbReference>
<dbReference type="GO" id="GO:0048034">
    <property type="term" value="P:heme O biosynthetic process"/>
    <property type="evidence" value="ECO:0007669"/>
    <property type="project" value="UniProtKB-UniRule"/>
</dbReference>
<dbReference type="CDD" id="cd13957">
    <property type="entry name" value="PT_UbiA_Cox10"/>
    <property type="match status" value="1"/>
</dbReference>
<dbReference type="Gene3D" id="1.10.357.140">
    <property type="entry name" value="UbiA prenyltransferase"/>
    <property type="match status" value="1"/>
</dbReference>
<dbReference type="HAMAP" id="MF_00154">
    <property type="entry name" value="CyoE_CtaB"/>
    <property type="match status" value="1"/>
</dbReference>
<dbReference type="InterPro" id="IPR006369">
    <property type="entry name" value="Protohaem_IX_farnesylTrfase"/>
</dbReference>
<dbReference type="InterPro" id="IPR000537">
    <property type="entry name" value="UbiA_prenyltransferase"/>
</dbReference>
<dbReference type="InterPro" id="IPR030470">
    <property type="entry name" value="UbiA_prenylTrfase_CS"/>
</dbReference>
<dbReference type="InterPro" id="IPR044878">
    <property type="entry name" value="UbiA_sf"/>
</dbReference>
<dbReference type="NCBIfam" id="TIGR01473">
    <property type="entry name" value="cyoE_ctaB"/>
    <property type="match status" value="1"/>
</dbReference>
<dbReference type="NCBIfam" id="NF003349">
    <property type="entry name" value="PRK04375.1-2"/>
    <property type="match status" value="1"/>
</dbReference>
<dbReference type="PANTHER" id="PTHR43448:SF7">
    <property type="entry name" value="4-HYDROXYBENZOATE SOLANESYLTRANSFERASE"/>
    <property type="match status" value="1"/>
</dbReference>
<dbReference type="PANTHER" id="PTHR43448">
    <property type="entry name" value="PROTOHEME IX FARNESYLTRANSFERASE, MITOCHONDRIAL"/>
    <property type="match status" value="1"/>
</dbReference>
<dbReference type="Pfam" id="PF01040">
    <property type="entry name" value="UbiA"/>
    <property type="match status" value="1"/>
</dbReference>
<dbReference type="PROSITE" id="PS00943">
    <property type="entry name" value="UBIA"/>
    <property type="match status" value="1"/>
</dbReference>
<evidence type="ECO:0000255" key="1">
    <source>
        <dbReference type="HAMAP-Rule" id="MF_00154"/>
    </source>
</evidence>
<feature type="chain" id="PRO_0000326983" description="Protoheme IX farnesyltransferase">
    <location>
        <begin position="1"/>
        <end position="317"/>
    </location>
</feature>
<feature type="transmembrane region" description="Helical" evidence="1">
    <location>
        <begin position="39"/>
        <end position="59"/>
    </location>
</feature>
<feature type="transmembrane region" description="Helical" evidence="1">
    <location>
        <begin position="60"/>
        <end position="80"/>
    </location>
</feature>
<feature type="transmembrane region" description="Helical" evidence="1">
    <location>
        <begin position="109"/>
        <end position="129"/>
    </location>
</feature>
<feature type="transmembrane region" description="Helical" evidence="1">
    <location>
        <begin position="131"/>
        <end position="151"/>
    </location>
</feature>
<feature type="transmembrane region" description="Helical" evidence="1">
    <location>
        <begin position="160"/>
        <end position="180"/>
    </location>
</feature>
<feature type="transmembrane region" description="Helical" evidence="1">
    <location>
        <begin position="184"/>
        <end position="204"/>
    </location>
</feature>
<feature type="transmembrane region" description="Helical" evidence="1">
    <location>
        <begin position="249"/>
        <end position="269"/>
    </location>
</feature>
<feature type="transmembrane region" description="Helical" evidence="1">
    <location>
        <begin position="297"/>
        <end position="317"/>
    </location>
</feature>
<name>COXX_ACICJ</name>
<accession>A5G0I2</accession>
<keyword id="KW-0997">Cell inner membrane</keyword>
<keyword id="KW-1003">Cell membrane</keyword>
<keyword id="KW-0350">Heme biosynthesis</keyword>
<keyword id="KW-0472">Membrane</keyword>
<keyword id="KW-1185">Reference proteome</keyword>
<keyword id="KW-0808">Transferase</keyword>
<keyword id="KW-0812">Transmembrane</keyword>
<keyword id="KW-1133">Transmembrane helix</keyword>
<proteinExistence type="inferred from homology"/>
<organism>
    <name type="scientific">Acidiphilium cryptum (strain JF-5)</name>
    <dbReference type="NCBI Taxonomy" id="349163"/>
    <lineage>
        <taxon>Bacteria</taxon>
        <taxon>Pseudomonadati</taxon>
        <taxon>Pseudomonadota</taxon>
        <taxon>Alphaproteobacteria</taxon>
        <taxon>Acetobacterales</taxon>
        <taxon>Acidocellaceae</taxon>
        <taxon>Acidiphilium</taxon>
    </lineage>
</organism>